<feature type="chain" id="PRO_1000189215" description="Isoleucine--tRNA ligase">
    <location>
        <begin position="1"/>
        <end position="952"/>
    </location>
</feature>
<feature type="short sequence motif" description="'HIGH' region">
    <location>
        <begin position="58"/>
        <end position="68"/>
    </location>
</feature>
<feature type="short sequence motif" description="'KMSKS' region">
    <location>
        <begin position="617"/>
        <end position="621"/>
    </location>
</feature>
<feature type="binding site" evidence="1">
    <location>
        <position position="576"/>
    </location>
    <ligand>
        <name>L-isoleucyl-5'-AMP</name>
        <dbReference type="ChEBI" id="CHEBI:178002"/>
    </ligand>
</feature>
<feature type="binding site" evidence="1">
    <location>
        <position position="620"/>
    </location>
    <ligand>
        <name>ATP</name>
        <dbReference type="ChEBI" id="CHEBI:30616"/>
    </ligand>
</feature>
<feature type="binding site" evidence="1">
    <location>
        <position position="915"/>
    </location>
    <ligand>
        <name>Zn(2+)</name>
        <dbReference type="ChEBI" id="CHEBI:29105"/>
    </ligand>
</feature>
<feature type="binding site" evidence="1">
    <location>
        <position position="918"/>
    </location>
    <ligand>
        <name>Zn(2+)</name>
        <dbReference type="ChEBI" id="CHEBI:29105"/>
    </ligand>
</feature>
<feature type="binding site" evidence="1">
    <location>
        <position position="935"/>
    </location>
    <ligand>
        <name>Zn(2+)</name>
        <dbReference type="ChEBI" id="CHEBI:29105"/>
    </ligand>
</feature>
<feature type="binding site" evidence="1">
    <location>
        <position position="938"/>
    </location>
    <ligand>
        <name>Zn(2+)</name>
        <dbReference type="ChEBI" id="CHEBI:29105"/>
    </ligand>
</feature>
<organism>
    <name type="scientific">Vibrio atlanticus (strain LGP32)</name>
    <name type="common">Vibrio splendidus (strain Mel32)</name>
    <dbReference type="NCBI Taxonomy" id="575788"/>
    <lineage>
        <taxon>Bacteria</taxon>
        <taxon>Pseudomonadati</taxon>
        <taxon>Pseudomonadota</taxon>
        <taxon>Gammaproteobacteria</taxon>
        <taxon>Vibrionales</taxon>
        <taxon>Vibrionaceae</taxon>
        <taxon>Vibrio</taxon>
    </lineage>
</organism>
<gene>
    <name evidence="1" type="primary">ileS</name>
    <name type="ordered locus">VS_0536</name>
</gene>
<comment type="function">
    <text evidence="1">Catalyzes the attachment of isoleucine to tRNA(Ile). As IleRS can inadvertently accommodate and process structurally similar amino acids such as valine, to avoid such errors it has two additional distinct tRNA(Ile)-dependent editing activities. One activity is designated as 'pretransfer' editing and involves the hydrolysis of activated Val-AMP. The other activity is designated 'posttransfer' editing and involves deacylation of mischarged Val-tRNA(Ile).</text>
</comment>
<comment type="catalytic activity">
    <reaction evidence="1">
        <text>tRNA(Ile) + L-isoleucine + ATP = L-isoleucyl-tRNA(Ile) + AMP + diphosphate</text>
        <dbReference type="Rhea" id="RHEA:11060"/>
        <dbReference type="Rhea" id="RHEA-COMP:9666"/>
        <dbReference type="Rhea" id="RHEA-COMP:9695"/>
        <dbReference type="ChEBI" id="CHEBI:30616"/>
        <dbReference type="ChEBI" id="CHEBI:33019"/>
        <dbReference type="ChEBI" id="CHEBI:58045"/>
        <dbReference type="ChEBI" id="CHEBI:78442"/>
        <dbReference type="ChEBI" id="CHEBI:78528"/>
        <dbReference type="ChEBI" id="CHEBI:456215"/>
        <dbReference type="EC" id="6.1.1.5"/>
    </reaction>
</comment>
<comment type="cofactor">
    <cofactor evidence="1">
        <name>Zn(2+)</name>
        <dbReference type="ChEBI" id="CHEBI:29105"/>
    </cofactor>
    <text evidence="1">Binds 1 zinc ion per subunit.</text>
</comment>
<comment type="subunit">
    <text evidence="1">Monomer.</text>
</comment>
<comment type="subcellular location">
    <subcellularLocation>
        <location evidence="1">Cytoplasm</location>
    </subcellularLocation>
</comment>
<comment type="domain">
    <text evidence="1">IleRS has two distinct active sites: one for aminoacylation and one for editing. The misactivated valine is translocated from the active site to the editing site, which sterically excludes the correctly activated isoleucine. The single editing site contains two valyl binding pockets, one specific for each substrate (Val-AMP or Val-tRNA(Ile)).</text>
</comment>
<comment type="similarity">
    <text evidence="1">Belongs to the class-I aminoacyl-tRNA synthetase family. IleS type 1 subfamily.</text>
</comment>
<reference key="1">
    <citation type="submission" date="2009-02" db="EMBL/GenBank/DDBJ databases">
        <title>Vibrio splendidus str. LGP32 complete genome.</title>
        <authorList>
            <person name="Mazel D."/>
            <person name="Le Roux F."/>
        </authorList>
    </citation>
    <scope>NUCLEOTIDE SEQUENCE [LARGE SCALE GENOMIC DNA]</scope>
    <source>
        <strain>LGP32</strain>
    </source>
</reference>
<evidence type="ECO:0000255" key="1">
    <source>
        <dbReference type="HAMAP-Rule" id="MF_02002"/>
    </source>
</evidence>
<name>SYI_VIBA3</name>
<sequence length="952" mass="106624">MSDYKDTLNLPETGFPMRGNLANREPEMLKRWYKEDLYGEIRKAKKGKKSFVLHDGPPYANGDIHIGHALNKILKDIIIKSKTLSGFDAPYIPGWDCHGLPIELMVEKKKGKPGQKISAAEFREECRKYAAGQVEGQKESFKRLGIMGEWDKPYRTMDFGTEANIIRSLGKIADKGHLLKGFKPVHWCTDCGSALAEAEVEYKDKVSPSIDVKFTAADEAALLEKFTLAEGHAGQGEISIVIWTTTPWTLPANRAVCLRDDLEYVLIQVEANGDQPAQRIVVASELAKDVMDRAGIEHFHNLGFATGADLELSQFNHPFYNFTVPAVLGDHVTTDSGTGVVHTAPGHGQEDFVVGKKYNLEIANPVGSNGVYLPDTELFAGQHVFKANDSVLEVLKEKGALLHHHAYEHSYPHCWRHKTPIIFRATPQWFISMDQAGLRAKALESTKSVEWMPEWGQSRIEGMIEGRPEWCISRQRTWGVPIALFVHKETSELHPDSPALIEKVAKLVEEKGIQAWWDVDAAELMGAEDADKYEKVLDTLDVWFDSGVTHFSVVDSREEYNFPNEERTHSADLYLEGSDQHRGWFQSSLISSIAMKDEAPYKQVLTHGFVVDGNGRKMSKSIGNVVAPKDVTNKLGADILRLWVASTDYTNEVAVSDEILKRSADAYRRIRNTARFFLANLNGFNPETDLVPAEEMVALDRWAVGRAQAAQEEIVKAYGEYNTHGVTQRLMQFCSIEMGSFYLDVIKDRQYTAKQGSHAQRSCQTALYYIVEALVRWMAPIMSFTADEIWNEMPGERDTFVFTGEWFEGLFGLADDEELSNEFWTEIQSVRGAVNKLLEDARKEKTIGGALQAEVTLYADDALAAKINKLEDELRFVLITSAAVVKPLSDKSDTAQATDVEGLYVEVAATEAEKCDRCWHHTPDVGTIEGHEKICGRCVSNIDGEGEVRKFA</sequence>
<keyword id="KW-0030">Aminoacyl-tRNA synthetase</keyword>
<keyword id="KW-0067">ATP-binding</keyword>
<keyword id="KW-0963">Cytoplasm</keyword>
<keyword id="KW-0436">Ligase</keyword>
<keyword id="KW-0479">Metal-binding</keyword>
<keyword id="KW-0547">Nucleotide-binding</keyword>
<keyword id="KW-0648">Protein biosynthesis</keyword>
<keyword id="KW-0862">Zinc</keyword>
<accession>B7VJ87</accession>
<dbReference type="EC" id="6.1.1.5" evidence="1"/>
<dbReference type="EMBL" id="FM954972">
    <property type="protein sequence ID" value="CAV17541.1"/>
    <property type="molecule type" value="Genomic_DNA"/>
</dbReference>
<dbReference type="SMR" id="B7VJ87"/>
<dbReference type="STRING" id="575788.VS_0536"/>
<dbReference type="KEGG" id="vsp:VS_0536"/>
<dbReference type="PATRIC" id="fig|575788.5.peg.1900"/>
<dbReference type="eggNOG" id="COG0060">
    <property type="taxonomic scope" value="Bacteria"/>
</dbReference>
<dbReference type="HOGENOM" id="CLU_001493_7_1_6"/>
<dbReference type="Proteomes" id="UP000009100">
    <property type="component" value="Chromosome 1"/>
</dbReference>
<dbReference type="GO" id="GO:0005829">
    <property type="term" value="C:cytosol"/>
    <property type="evidence" value="ECO:0007669"/>
    <property type="project" value="TreeGrafter"/>
</dbReference>
<dbReference type="GO" id="GO:0002161">
    <property type="term" value="F:aminoacyl-tRNA deacylase activity"/>
    <property type="evidence" value="ECO:0007669"/>
    <property type="project" value="InterPro"/>
</dbReference>
<dbReference type="GO" id="GO:0005524">
    <property type="term" value="F:ATP binding"/>
    <property type="evidence" value="ECO:0007669"/>
    <property type="project" value="UniProtKB-UniRule"/>
</dbReference>
<dbReference type="GO" id="GO:0004822">
    <property type="term" value="F:isoleucine-tRNA ligase activity"/>
    <property type="evidence" value="ECO:0007669"/>
    <property type="project" value="UniProtKB-UniRule"/>
</dbReference>
<dbReference type="GO" id="GO:0000049">
    <property type="term" value="F:tRNA binding"/>
    <property type="evidence" value="ECO:0007669"/>
    <property type="project" value="InterPro"/>
</dbReference>
<dbReference type="GO" id="GO:0008270">
    <property type="term" value="F:zinc ion binding"/>
    <property type="evidence" value="ECO:0007669"/>
    <property type="project" value="UniProtKB-UniRule"/>
</dbReference>
<dbReference type="GO" id="GO:0006428">
    <property type="term" value="P:isoleucyl-tRNA aminoacylation"/>
    <property type="evidence" value="ECO:0007669"/>
    <property type="project" value="UniProtKB-UniRule"/>
</dbReference>
<dbReference type="CDD" id="cd07960">
    <property type="entry name" value="Anticodon_Ia_Ile_BEm"/>
    <property type="match status" value="1"/>
</dbReference>
<dbReference type="CDD" id="cd00818">
    <property type="entry name" value="IleRS_core"/>
    <property type="match status" value="1"/>
</dbReference>
<dbReference type="FunFam" id="1.10.730.20:FF:000001">
    <property type="entry name" value="Isoleucine--tRNA ligase"/>
    <property type="match status" value="1"/>
</dbReference>
<dbReference type="FunFam" id="3.40.50.620:FF:000048">
    <property type="entry name" value="Isoleucine--tRNA ligase"/>
    <property type="match status" value="1"/>
</dbReference>
<dbReference type="FunFam" id="3.40.50.620:FF:000168">
    <property type="entry name" value="Isoleucine--tRNA ligase"/>
    <property type="match status" value="1"/>
</dbReference>
<dbReference type="Gene3D" id="1.10.730.20">
    <property type="match status" value="1"/>
</dbReference>
<dbReference type="Gene3D" id="3.40.50.620">
    <property type="entry name" value="HUPs"/>
    <property type="match status" value="2"/>
</dbReference>
<dbReference type="Gene3D" id="1.10.10.830">
    <property type="entry name" value="Ile-tRNA synthetase CP2 domain-like"/>
    <property type="match status" value="1"/>
</dbReference>
<dbReference type="HAMAP" id="MF_02002">
    <property type="entry name" value="Ile_tRNA_synth_type1"/>
    <property type="match status" value="1"/>
</dbReference>
<dbReference type="InterPro" id="IPR001412">
    <property type="entry name" value="aa-tRNA-synth_I_CS"/>
</dbReference>
<dbReference type="InterPro" id="IPR002300">
    <property type="entry name" value="aa-tRNA-synth_Ia"/>
</dbReference>
<dbReference type="InterPro" id="IPR033708">
    <property type="entry name" value="Anticodon_Ile_BEm"/>
</dbReference>
<dbReference type="InterPro" id="IPR002301">
    <property type="entry name" value="Ile-tRNA-ligase"/>
</dbReference>
<dbReference type="InterPro" id="IPR023585">
    <property type="entry name" value="Ile-tRNA-ligase_type1"/>
</dbReference>
<dbReference type="InterPro" id="IPR050081">
    <property type="entry name" value="Ile-tRNA_ligase"/>
</dbReference>
<dbReference type="InterPro" id="IPR013155">
    <property type="entry name" value="M/V/L/I-tRNA-synth_anticd-bd"/>
</dbReference>
<dbReference type="InterPro" id="IPR014729">
    <property type="entry name" value="Rossmann-like_a/b/a_fold"/>
</dbReference>
<dbReference type="InterPro" id="IPR009080">
    <property type="entry name" value="tRNAsynth_Ia_anticodon-bd"/>
</dbReference>
<dbReference type="InterPro" id="IPR009008">
    <property type="entry name" value="Val/Leu/Ile-tRNA-synth_edit"/>
</dbReference>
<dbReference type="InterPro" id="IPR010663">
    <property type="entry name" value="Znf_FPG/IleRS"/>
</dbReference>
<dbReference type="NCBIfam" id="TIGR00392">
    <property type="entry name" value="ileS"/>
    <property type="match status" value="1"/>
</dbReference>
<dbReference type="PANTHER" id="PTHR42765:SF1">
    <property type="entry name" value="ISOLEUCINE--TRNA LIGASE, MITOCHONDRIAL"/>
    <property type="match status" value="1"/>
</dbReference>
<dbReference type="PANTHER" id="PTHR42765">
    <property type="entry name" value="SOLEUCYL-TRNA SYNTHETASE"/>
    <property type="match status" value="1"/>
</dbReference>
<dbReference type="Pfam" id="PF08264">
    <property type="entry name" value="Anticodon_1"/>
    <property type="match status" value="1"/>
</dbReference>
<dbReference type="Pfam" id="PF00133">
    <property type="entry name" value="tRNA-synt_1"/>
    <property type="match status" value="1"/>
</dbReference>
<dbReference type="Pfam" id="PF06827">
    <property type="entry name" value="zf-FPG_IleRS"/>
    <property type="match status" value="1"/>
</dbReference>
<dbReference type="PRINTS" id="PR00984">
    <property type="entry name" value="TRNASYNTHILE"/>
</dbReference>
<dbReference type="SUPFAM" id="SSF47323">
    <property type="entry name" value="Anticodon-binding domain of a subclass of class I aminoacyl-tRNA synthetases"/>
    <property type="match status" value="1"/>
</dbReference>
<dbReference type="SUPFAM" id="SSF52374">
    <property type="entry name" value="Nucleotidylyl transferase"/>
    <property type="match status" value="1"/>
</dbReference>
<dbReference type="SUPFAM" id="SSF50677">
    <property type="entry name" value="ValRS/IleRS/LeuRS editing domain"/>
    <property type="match status" value="1"/>
</dbReference>
<dbReference type="PROSITE" id="PS00178">
    <property type="entry name" value="AA_TRNA_LIGASE_I"/>
    <property type="match status" value="1"/>
</dbReference>
<proteinExistence type="inferred from homology"/>
<protein>
    <recommendedName>
        <fullName evidence="1">Isoleucine--tRNA ligase</fullName>
        <ecNumber evidence="1">6.1.1.5</ecNumber>
    </recommendedName>
    <alternativeName>
        <fullName evidence="1">Isoleucyl-tRNA synthetase</fullName>
        <shortName evidence="1">IleRS</shortName>
    </alternativeName>
</protein>